<sequence length="203" mass="23384">MHTGEKPYTCEECVKLLTNPQALLYTGAFILNKNFTNVKNAAKPLLNPHPLINKRIHTGEKPYTCEECGKAFYRSSHLTEHKNIHTGEKSYKCEECGNAFYRSSHLTKHKRIHSGQKPYKCEECGKAFRQSSALNEHKKIHTAEKPYKCKECGKAFRWSRSLNEHTNIHIGEKPYTCEECGKDFTWSSTLTVHQRIQTGEKHS</sequence>
<accession>Q49A33</accession>
<gene>
    <name type="primary">ZNF876P</name>
</gene>
<proteinExistence type="uncertain"/>
<feature type="chain" id="PRO_0000332151" description="Putative zinc finger protein 876">
    <location>
        <begin position="1"/>
        <end position="203"/>
    </location>
</feature>
<feature type="zinc finger region" description="C2H2-type 1" evidence="2">
    <location>
        <begin position="63"/>
        <end position="85"/>
    </location>
</feature>
<feature type="zinc finger region" description="C2H2-type 2" evidence="2">
    <location>
        <begin position="91"/>
        <end position="113"/>
    </location>
</feature>
<feature type="zinc finger region" description="C2H2-type 3" evidence="2">
    <location>
        <begin position="119"/>
        <end position="141"/>
    </location>
</feature>
<feature type="zinc finger region" description="C2H2-type 4" evidence="2">
    <location>
        <begin position="147"/>
        <end position="169"/>
    </location>
</feature>
<feature type="zinc finger region" description="C2H2-type 5; degenerate" evidence="2">
    <location>
        <begin position="175"/>
        <end position="197"/>
    </location>
</feature>
<dbReference type="EMBL" id="AC079140">
    <property type="status" value="NOT_ANNOTATED_CDS"/>
    <property type="molecule type" value="Genomic_DNA"/>
</dbReference>
<dbReference type="EMBL" id="AC108475">
    <property type="status" value="NOT_ANNOTATED_CDS"/>
    <property type="molecule type" value="Genomic_DNA"/>
</dbReference>
<dbReference type="EMBL" id="BC046475">
    <property type="status" value="NOT_ANNOTATED_CDS"/>
    <property type="molecule type" value="mRNA"/>
</dbReference>
<dbReference type="SMR" id="Q49A33"/>
<dbReference type="iPTMnet" id="Q49A33"/>
<dbReference type="PhosphoSitePlus" id="Q49A33"/>
<dbReference type="BioMuta" id="HGNC:32472"/>
<dbReference type="DMDM" id="257051074"/>
<dbReference type="jPOST" id="Q49A33"/>
<dbReference type="MassIVE" id="Q49A33"/>
<dbReference type="PeptideAtlas" id="Q49A33"/>
<dbReference type="AGR" id="HGNC:32472"/>
<dbReference type="GeneCards" id="ZNF876P"/>
<dbReference type="HGNC" id="HGNC:32472">
    <property type="gene designation" value="ZNF876P"/>
</dbReference>
<dbReference type="neXtProt" id="NX_Q49A33"/>
<dbReference type="InParanoid" id="Q49A33"/>
<dbReference type="PAN-GO" id="Q49A33">
    <property type="GO annotations" value="3 GO annotations based on evolutionary models"/>
</dbReference>
<dbReference type="PhylomeDB" id="Q49A33"/>
<dbReference type="ChiTaRS" id="ZNF876P">
    <property type="organism name" value="human"/>
</dbReference>
<dbReference type="Pharos" id="Q49A33">
    <property type="development level" value="Tdark"/>
</dbReference>
<dbReference type="Proteomes" id="UP000005640">
    <property type="component" value="Unplaced"/>
</dbReference>
<dbReference type="RNAct" id="Q49A33">
    <property type="molecule type" value="protein"/>
</dbReference>
<dbReference type="GO" id="GO:0005634">
    <property type="term" value="C:nucleus"/>
    <property type="evidence" value="ECO:0007669"/>
    <property type="project" value="UniProtKB-SubCell"/>
</dbReference>
<dbReference type="GO" id="GO:0000981">
    <property type="term" value="F:DNA-binding transcription factor activity, RNA polymerase II-specific"/>
    <property type="evidence" value="ECO:0000318"/>
    <property type="project" value="GO_Central"/>
</dbReference>
<dbReference type="GO" id="GO:0000978">
    <property type="term" value="F:RNA polymerase II cis-regulatory region sequence-specific DNA binding"/>
    <property type="evidence" value="ECO:0000318"/>
    <property type="project" value="GO_Central"/>
</dbReference>
<dbReference type="GO" id="GO:0008270">
    <property type="term" value="F:zinc ion binding"/>
    <property type="evidence" value="ECO:0007669"/>
    <property type="project" value="UniProtKB-KW"/>
</dbReference>
<dbReference type="GO" id="GO:0006355">
    <property type="term" value="P:regulation of DNA-templated transcription"/>
    <property type="evidence" value="ECO:0000318"/>
    <property type="project" value="GO_Central"/>
</dbReference>
<dbReference type="FunFam" id="3.30.160.60:FF:001868">
    <property type="entry name" value="Zinc finger protein 264"/>
    <property type="match status" value="2"/>
</dbReference>
<dbReference type="FunFam" id="3.30.160.60:FF:000023">
    <property type="entry name" value="zinc finger protein 37 homolog"/>
    <property type="match status" value="1"/>
</dbReference>
<dbReference type="FunFam" id="3.30.160.60:FF:002254">
    <property type="entry name" value="Zinc finger protein 540"/>
    <property type="match status" value="2"/>
</dbReference>
<dbReference type="Gene3D" id="3.30.160.60">
    <property type="entry name" value="Classic Zinc Finger"/>
    <property type="match status" value="6"/>
</dbReference>
<dbReference type="InterPro" id="IPR050717">
    <property type="entry name" value="C2H2-ZF_Transcription_Reg"/>
</dbReference>
<dbReference type="InterPro" id="IPR036236">
    <property type="entry name" value="Znf_C2H2_sf"/>
</dbReference>
<dbReference type="InterPro" id="IPR013087">
    <property type="entry name" value="Znf_C2H2_type"/>
</dbReference>
<dbReference type="PANTHER" id="PTHR14196">
    <property type="entry name" value="ODD-SKIPPED - RELATED"/>
    <property type="match status" value="1"/>
</dbReference>
<dbReference type="PANTHER" id="PTHR14196:SF12">
    <property type="entry name" value="ZINC FINGER PROTEIN 208-LIKE"/>
    <property type="match status" value="1"/>
</dbReference>
<dbReference type="Pfam" id="PF00096">
    <property type="entry name" value="zf-C2H2"/>
    <property type="match status" value="5"/>
</dbReference>
<dbReference type="SMART" id="SM00355">
    <property type="entry name" value="ZnF_C2H2"/>
    <property type="match status" value="5"/>
</dbReference>
<dbReference type="SUPFAM" id="SSF57667">
    <property type="entry name" value="beta-beta-alpha zinc fingers"/>
    <property type="match status" value="3"/>
</dbReference>
<dbReference type="PROSITE" id="PS00028">
    <property type="entry name" value="ZINC_FINGER_C2H2_1"/>
    <property type="match status" value="4"/>
</dbReference>
<dbReference type="PROSITE" id="PS50157">
    <property type="entry name" value="ZINC_FINGER_C2H2_2"/>
    <property type="match status" value="5"/>
</dbReference>
<keyword id="KW-0238">DNA-binding</keyword>
<keyword id="KW-0479">Metal-binding</keyword>
<keyword id="KW-0539">Nucleus</keyword>
<keyword id="KW-1185">Reference proteome</keyword>
<keyword id="KW-0677">Repeat</keyword>
<keyword id="KW-0804">Transcription</keyword>
<keyword id="KW-0805">Transcription regulation</keyword>
<keyword id="KW-0862">Zinc</keyword>
<keyword id="KW-0863">Zinc-finger</keyword>
<comment type="function">
    <text evidence="1">May be involved in transcriptional regulation.</text>
</comment>
<comment type="subcellular location">
    <subcellularLocation>
        <location evidence="3">Nucleus</location>
    </subcellularLocation>
</comment>
<comment type="similarity">
    <text evidence="3">Belongs to the krueppel C2H2-type zinc-finger protein family.</text>
</comment>
<comment type="caution">
    <text evidence="3">Product of a dubious gene prediction.</text>
</comment>
<organism>
    <name type="scientific">Homo sapiens</name>
    <name type="common">Human</name>
    <dbReference type="NCBI Taxonomy" id="9606"/>
    <lineage>
        <taxon>Eukaryota</taxon>
        <taxon>Metazoa</taxon>
        <taxon>Chordata</taxon>
        <taxon>Craniata</taxon>
        <taxon>Vertebrata</taxon>
        <taxon>Euteleostomi</taxon>
        <taxon>Mammalia</taxon>
        <taxon>Eutheria</taxon>
        <taxon>Euarchontoglires</taxon>
        <taxon>Primates</taxon>
        <taxon>Haplorrhini</taxon>
        <taxon>Catarrhini</taxon>
        <taxon>Hominidae</taxon>
        <taxon>Homo</taxon>
    </lineage>
</organism>
<name>Z876P_HUMAN</name>
<protein>
    <recommendedName>
        <fullName>Putative zinc finger protein 876</fullName>
    </recommendedName>
</protein>
<reference key="1">
    <citation type="journal article" date="2005" name="Nature">
        <title>Generation and annotation of the DNA sequences of human chromosomes 2 and 4.</title>
        <authorList>
            <person name="Hillier L.W."/>
            <person name="Graves T.A."/>
            <person name="Fulton R.S."/>
            <person name="Fulton L.A."/>
            <person name="Pepin K.H."/>
            <person name="Minx P."/>
            <person name="Wagner-McPherson C."/>
            <person name="Layman D."/>
            <person name="Wylie K."/>
            <person name="Sekhon M."/>
            <person name="Becker M.C."/>
            <person name="Fewell G.A."/>
            <person name="Delehaunty K.D."/>
            <person name="Miner T.L."/>
            <person name="Nash W.E."/>
            <person name="Kremitzki C."/>
            <person name="Oddy L."/>
            <person name="Du H."/>
            <person name="Sun H."/>
            <person name="Bradshaw-Cordum H."/>
            <person name="Ali J."/>
            <person name="Carter J."/>
            <person name="Cordes M."/>
            <person name="Harris A."/>
            <person name="Isak A."/>
            <person name="van Brunt A."/>
            <person name="Nguyen C."/>
            <person name="Du F."/>
            <person name="Courtney L."/>
            <person name="Kalicki J."/>
            <person name="Ozersky P."/>
            <person name="Abbott S."/>
            <person name="Armstrong J."/>
            <person name="Belter E.A."/>
            <person name="Caruso L."/>
            <person name="Cedroni M."/>
            <person name="Cotton M."/>
            <person name="Davidson T."/>
            <person name="Desai A."/>
            <person name="Elliott G."/>
            <person name="Erb T."/>
            <person name="Fronick C."/>
            <person name="Gaige T."/>
            <person name="Haakenson W."/>
            <person name="Haglund K."/>
            <person name="Holmes A."/>
            <person name="Harkins R."/>
            <person name="Kim K."/>
            <person name="Kruchowski S.S."/>
            <person name="Strong C.M."/>
            <person name="Grewal N."/>
            <person name="Goyea E."/>
            <person name="Hou S."/>
            <person name="Levy A."/>
            <person name="Martinka S."/>
            <person name="Mead K."/>
            <person name="McLellan M.D."/>
            <person name="Meyer R."/>
            <person name="Randall-Maher J."/>
            <person name="Tomlinson C."/>
            <person name="Dauphin-Kohlberg S."/>
            <person name="Kozlowicz-Reilly A."/>
            <person name="Shah N."/>
            <person name="Swearengen-Shahid S."/>
            <person name="Snider J."/>
            <person name="Strong J.T."/>
            <person name="Thompson J."/>
            <person name="Yoakum M."/>
            <person name="Leonard S."/>
            <person name="Pearman C."/>
            <person name="Trani L."/>
            <person name="Radionenko M."/>
            <person name="Waligorski J.E."/>
            <person name="Wang C."/>
            <person name="Rock S.M."/>
            <person name="Tin-Wollam A.-M."/>
            <person name="Maupin R."/>
            <person name="Latreille P."/>
            <person name="Wendl M.C."/>
            <person name="Yang S.-P."/>
            <person name="Pohl C."/>
            <person name="Wallis J.W."/>
            <person name="Spieth J."/>
            <person name="Bieri T.A."/>
            <person name="Berkowicz N."/>
            <person name="Nelson J.O."/>
            <person name="Osborne J."/>
            <person name="Ding L."/>
            <person name="Meyer R."/>
            <person name="Sabo A."/>
            <person name="Shotland Y."/>
            <person name="Sinha P."/>
            <person name="Wohldmann P.E."/>
            <person name="Cook L.L."/>
            <person name="Hickenbotham M.T."/>
            <person name="Eldred J."/>
            <person name="Williams D."/>
            <person name="Jones T.A."/>
            <person name="She X."/>
            <person name="Ciccarelli F.D."/>
            <person name="Izaurralde E."/>
            <person name="Taylor J."/>
            <person name="Schmutz J."/>
            <person name="Myers R.M."/>
            <person name="Cox D.R."/>
            <person name="Huang X."/>
            <person name="McPherson J.D."/>
            <person name="Mardis E.R."/>
            <person name="Clifton S.W."/>
            <person name="Warren W.C."/>
            <person name="Chinwalla A.T."/>
            <person name="Eddy S.R."/>
            <person name="Marra M.A."/>
            <person name="Ovcharenko I."/>
            <person name="Furey T.S."/>
            <person name="Miller W."/>
            <person name="Eichler E.E."/>
            <person name="Bork P."/>
            <person name="Suyama M."/>
            <person name="Torrents D."/>
            <person name="Waterston R.H."/>
            <person name="Wilson R.K."/>
        </authorList>
    </citation>
    <scope>NUCLEOTIDE SEQUENCE [LARGE SCALE GENOMIC DNA]</scope>
</reference>
<reference key="2">
    <citation type="journal article" date="2004" name="Genome Res.">
        <title>The status, quality, and expansion of the NIH full-length cDNA project: the Mammalian Gene Collection (MGC).</title>
        <authorList>
            <consortium name="The MGC Project Team"/>
        </authorList>
    </citation>
    <scope>NUCLEOTIDE SEQUENCE [LARGE SCALE MRNA]</scope>
    <source>
        <tissue>Testis</tissue>
    </source>
</reference>
<evidence type="ECO:0000250" key="1"/>
<evidence type="ECO:0000255" key="2">
    <source>
        <dbReference type="PROSITE-ProRule" id="PRU00042"/>
    </source>
</evidence>
<evidence type="ECO:0000305" key="3"/>